<feature type="chain" id="PRO_0000063375" description="Chaperonin GroEL">
    <location>
        <begin position="1"/>
        <end position="540" status="greater than"/>
    </location>
</feature>
<feature type="binding site" evidence="1">
    <location>
        <begin position="30"/>
        <end position="33"/>
    </location>
    <ligand>
        <name>ATP</name>
        <dbReference type="ChEBI" id="CHEBI:30616"/>
    </ligand>
</feature>
<feature type="binding site" evidence="1">
    <location>
        <position position="51"/>
    </location>
    <ligand>
        <name>ATP</name>
        <dbReference type="ChEBI" id="CHEBI:30616"/>
    </ligand>
</feature>
<feature type="binding site" evidence="1">
    <location>
        <begin position="87"/>
        <end position="91"/>
    </location>
    <ligand>
        <name>ATP</name>
        <dbReference type="ChEBI" id="CHEBI:30616"/>
    </ligand>
</feature>
<feature type="binding site" evidence="1">
    <location>
        <position position="415"/>
    </location>
    <ligand>
        <name>ATP</name>
        <dbReference type="ChEBI" id="CHEBI:30616"/>
    </ligand>
</feature>
<feature type="binding site" evidence="1">
    <location>
        <begin position="479"/>
        <end position="481"/>
    </location>
    <ligand>
        <name>ATP</name>
        <dbReference type="ChEBI" id="CHEBI:30616"/>
    </ligand>
</feature>
<feature type="binding site" evidence="1">
    <location>
        <position position="495"/>
    </location>
    <ligand>
        <name>ATP</name>
        <dbReference type="ChEBI" id="CHEBI:30616"/>
    </ligand>
</feature>
<feature type="non-terminal residue">
    <location>
        <position position="540"/>
    </location>
</feature>
<proteinExistence type="inferred from homology"/>
<dbReference type="EC" id="5.6.1.7" evidence="1"/>
<dbReference type="EMBL" id="AB008152">
    <property type="protein sequence ID" value="BAA25237.1"/>
    <property type="molecule type" value="Genomic_DNA"/>
</dbReference>
<dbReference type="SMR" id="O66220"/>
<dbReference type="GO" id="GO:0005737">
    <property type="term" value="C:cytoplasm"/>
    <property type="evidence" value="ECO:0007669"/>
    <property type="project" value="UniProtKB-SubCell"/>
</dbReference>
<dbReference type="GO" id="GO:0005524">
    <property type="term" value="F:ATP binding"/>
    <property type="evidence" value="ECO:0007669"/>
    <property type="project" value="UniProtKB-KW"/>
</dbReference>
<dbReference type="GO" id="GO:0140662">
    <property type="term" value="F:ATP-dependent protein folding chaperone"/>
    <property type="evidence" value="ECO:0007669"/>
    <property type="project" value="InterPro"/>
</dbReference>
<dbReference type="GO" id="GO:0016853">
    <property type="term" value="F:isomerase activity"/>
    <property type="evidence" value="ECO:0007669"/>
    <property type="project" value="UniProtKB-KW"/>
</dbReference>
<dbReference type="GO" id="GO:0042026">
    <property type="term" value="P:protein refolding"/>
    <property type="evidence" value="ECO:0007669"/>
    <property type="project" value="InterPro"/>
</dbReference>
<dbReference type="CDD" id="cd03344">
    <property type="entry name" value="GroEL"/>
    <property type="match status" value="1"/>
</dbReference>
<dbReference type="FunFam" id="1.10.560.10:FF:000001">
    <property type="entry name" value="60 kDa chaperonin"/>
    <property type="match status" value="1"/>
</dbReference>
<dbReference type="FunFam" id="3.50.7.10:FF:000001">
    <property type="entry name" value="60 kDa chaperonin"/>
    <property type="match status" value="1"/>
</dbReference>
<dbReference type="Gene3D" id="3.50.7.10">
    <property type="entry name" value="GroEL"/>
    <property type="match status" value="1"/>
</dbReference>
<dbReference type="Gene3D" id="1.10.560.10">
    <property type="entry name" value="GroEL-like equatorial domain"/>
    <property type="match status" value="1"/>
</dbReference>
<dbReference type="Gene3D" id="3.30.260.10">
    <property type="entry name" value="TCP-1-like chaperonin intermediate domain"/>
    <property type="match status" value="1"/>
</dbReference>
<dbReference type="HAMAP" id="MF_00600">
    <property type="entry name" value="CH60"/>
    <property type="match status" value="1"/>
</dbReference>
<dbReference type="InterPro" id="IPR018370">
    <property type="entry name" value="Chaperonin_Cpn60_CS"/>
</dbReference>
<dbReference type="InterPro" id="IPR001844">
    <property type="entry name" value="Cpn60/GroEL"/>
</dbReference>
<dbReference type="InterPro" id="IPR002423">
    <property type="entry name" value="Cpn60/GroEL/TCP-1"/>
</dbReference>
<dbReference type="InterPro" id="IPR027409">
    <property type="entry name" value="GroEL-like_apical_dom_sf"/>
</dbReference>
<dbReference type="InterPro" id="IPR027413">
    <property type="entry name" value="GROEL-like_equatorial_sf"/>
</dbReference>
<dbReference type="InterPro" id="IPR027410">
    <property type="entry name" value="TCP-1-like_intermed_sf"/>
</dbReference>
<dbReference type="NCBIfam" id="TIGR02348">
    <property type="entry name" value="GroEL"/>
    <property type="match status" value="1"/>
</dbReference>
<dbReference type="NCBIfam" id="NF000592">
    <property type="entry name" value="PRK00013.1"/>
    <property type="match status" value="1"/>
</dbReference>
<dbReference type="NCBIfam" id="NF009487">
    <property type="entry name" value="PRK12849.1"/>
    <property type="match status" value="1"/>
</dbReference>
<dbReference type="NCBIfam" id="NF009488">
    <property type="entry name" value="PRK12850.1"/>
    <property type="match status" value="1"/>
</dbReference>
<dbReference type="NCBIfam" id="NF009489">
    <property type="entry name" value="PRK12851.1"/>
    <property type="match status" value="1"/>
</dbReference>
<dbReference type="PANTHER" id="PTHR45633">
    <property type="entry name" value="60 KDA HEAT SHOCK PROTEIN, MITOCHONDRIAL"/>
    <property type="match status" value="1"/>
</dbReference>
<dbReference type="Pfam" id="PF00118">
    <property type="entry name" value="Cpn60_TCP1"/>
    <property type="match status" value="1"/>
</dbReference>
<dbReference type="PRINTS" id="PR00298">
    <property type="entry name" value="CHAPERONIN60"/>
</dbReference>
<dbReference type="SUPFAM" id="SSF52029">
    <property type="entry name" value="GroEL apical domain-like"/>
    <property type="match status" value="1"/>
</dbReference>
<dbReference type="SUPFAM" id="SSF48592">
    <property type="entry name" value="GroEL equatorial domain-like"/>
    <property type="match status" value="1"/>
</dbReference>
<dbReference type="SUPFAM" id="SSF54849">
    <property type="entry name" value="GroEL-intermediate domain like"/>
    <property type="match status" value="1"/>
</dbReference>
<dbReference type="PROSITE" id="PS00296">
    <property type="entry name" value="CHAPERONINS_CPN60"/>
    <property type="match status" value="1"/>
</dbReference>
<gene>
    <name evidence="1" type="primary">groEL</name>
    <name evidence="1" type="synonym">groL</name>
    <name type="synonym">mopA</name>
</gene>
<evidence type="ECO:0000255" key="1">
    <source>
        <dbReference type="HAMAP-Rule" id="MF_00600"/>
    </source>
</evidence>
<comment type="function">
    <text evidence="1">Together with its co-chaperonin GroES, plays an essential role in assisting protein folding. The GroEL-GroES system forms a nano-cage that allows encapsulation of the non-native substrate proteins and provides a physical environment optimized to promote and accelerate protein folding.</text>
</comment>
<comment type="catalytic activity">
    <reaction evidence="1">
        <text>ATP + H2O + a folded polypeptide = ADP + phosphate + an unfolded polypeptide.</text>
        <dbReference type="EC" id="5.6.1.7"/>
    </reaction>
</comment>
<comment type="subunit">
    <text evidence="1">Forms a cylinder of 14 subunits composed of two heptameric rings stacked back-to-back. Interacts with the co-chaperonin GroES.</text>
</comment>
<comment type="subcellular location">
    <subcellularLocation>
        <location evidence="1">Cytoplasm</location>
    </subcellularLocation>
</comment>
<comment type="similarity">
    <text evidence="1">Belongs to the chaperonin (HSP60) family.</text>
</comment>
<organism>
    <name type="scientific">Pectobacterium carotovorum subsp. carotovorum</name>
    <name type="common">Erwinia carotovora subsp. carotovora</name>
    <dbReference type="NCBI Taxonomy" id="555"/>
    <lineage>
        <taxon>Bacteria</taxon>
        <taxon>Pseudomonadati</taxon>
        <taxon>Pseudomonadota</taxon>
        <taxon>Gammaproteobacteria</taxon>
        <taxon>Enterobacterales</taxon>
        <taxon>Pectobacteriaceae</taxon>
        <taxon>Pectobacterium</taxon>
    </lineage>
</organism>
<keyword id="KW-0067">ATP-binding</keyword>
<keyword id="KW-0143">Chaperone</keyword>
<keyword id="KW-0963">Cytoplasm</keyword>
<keyword id="KW-0413">Isomerase</keyword>
<keyword id="KW-0547">Nucleotide-binding</keyword>
<reference key="1">
    <citation type="journal article" date="1997" name="J. Gen. Appl. Microbiol.">
        <title>Phylogenetical relationship based on groE genes among phenotypically related Enterobacter, Pantoea, Klebsiella, Serratia, and Erwinia species.</title>
        <authorList>
            <person name="Harada H."/>
            <person name="Ishikawa H."/>
        </authorList>
    </citation>
    <scope>NUCLEOTIDE SEQUENCE [GENOMIC DNA]</scope>
    <source>
        <strain>JCM 20699 / NBRC 3380 / IAM 12633</strain>
    </source>
</reference>
<name>CH60_PECCC</name>
<accession>O66220</accession>
<sequence length="540" mass="56293">MAAKDVKFGNDARVKMLRGVNVLADAVKVTLGPKGRNVVLDKSFGAPTITKDGVSVAREIELEDKFENMGAQMVKEVASKANDAAGDGTTTATVLAQAIITEGLKAVAAGMNPMDLKRGIDKAVIAAVEELKALSVPCSDSKAIAQVGTISANSDETVGKMIAEAMDKVGKEGVITVEEGTGLQDELDVVEGMQFDRGYLSPYFINKPETGAVELESPFILLADKKISNIREMLPVLEAVAKAGKPLVIVAEDVEGEALATLVVNTMRGIVKVAAVKAPGFGDRRKAMLQDIATLTGGTVISEEIGLELEKATLEDLGQAKRVVINKDTTTIIDGTGEEAAIQGRVAQIRQQVEEATSDYDKEKLQERVAKLAGGVAVIKVGAATEVEMKEKKARVEDALAATRAAVEEGVVAGGGVALVRVAAKLASLTAQNEDQNVGIKVALRAMEAPLRQIVSNAGEEPSVVANNVKAGDGNYGYNAATEEYGNMIDFGILDPTKVTRSALQFAASVAGLMITTECMVTDLPKGDAPDLGGAGGMGG</sequence>
<protein>
    <recommendedName>
        <fullName evidence="1">Chaperonin GroEL</fullName>
        <ecNumber evidence="1">5.6.1.7</ecNumber>
    </recommendedName>
    <alternativeName>
        <fullName evidence="1">60 kDa chaperonin</fullName>
    </alternativeName>
    <alternativeName>
        <fullName evidence="1">Chaperonin-60</fullName>
        <shortName evidence="1">Cpn60</shortName>
    </alternativeName>
</protein>